<proteinExistence type="inferred from homology"/>
<accession>B2K296</accession>
<feature type="chain" id="PRO_1000138065" description="N-succinylglutamate 5-semialdehyde dehydrogenase">
    <location>
        <begin position="1"/>
        <end position="505"/>
    </location>
</feature>
<feature type="active site" evidence="1">
    <location>
        <position position="257"/>
    </location>
</feature>
<feature type="active site" evidence="1">
    <location>
        <position position="291"/>
    </location>
</feature>
<feature type="binding site" evidence="1">
    <location>
        <begin position="234"/>
        <end position="239"/>
    </location>
    <ligand>
        <name>NAD(+)</name>
        <dbReference type="ChEBI" id="CHEBI:57540"/>
    </ligand>
</feature>
<organism>
    <name type="scientific">Yersinia pseudotuberculosis serotype IB (strain PB1/+)</name>
    <dbReference type="NCBI Taxonomy" id="502801"/>
    <lineage>
        <taxon>Bacteria</taxon>
        <taxon>Pseudomonadati</taxon>
        <taxon>Pseudomonadota</taxon>
        <taxon>Gammaproteobacteria</taxon>
        <taxon>Enterobacterales</taxon>
        <taxon>Yersiniaceae</taxon>
        <taxon>Yersinia</taxon>
    </lineage>
</organism>
<comment type="function">
    <text evidence="1">Catalyzes the NAD-dependent reduction of succinylglutamate semialdehyde into succinylglutamate.</text>
</comment>
<comment type="catalytic activity">
    <reaction evidence="1">
        <text>N-succinyl-L-glutamate 5-semialdehyde + NAD(+) + H2O = N-succinyl-L-glutamate + NADH + 2 H(+)</text>
        <dbReference type="Rhea" id="RHEA:10812"/>
        <dbReference type="ChEBI" id="CHEBI:15377"/>
        <dbReference type="ChEBI" id="CHEBI:15378"/>
        <dbReference type="ChEBI" id="CHEBI:57540"/>
        <dbReference type="ChEBI" id="CHEBI:57945"/>
        <dbReference type="ChEBI" id="CHEBI:58520"/>
        <dbReference type="ChEBI" id="CHEBI:58763"/>
        <dbReference type="EC" id="1.2.1.71"/>
    </reaction>
</comment>
<comment type="pathway">
    <text evidence="1">Amino-acid degradation; L-arginine degradation via AST pathway; L-glutamate and succinate from L-arginine: step 4/5.</text>
</comment>
<comment type="similarity">
    <text evidence="1">Belongs to the aldehyde dehydrogenase family. AstD subfamily.</text>
</comment>
<evidence type="ECO:0000255" key="1">
    <source>
        <dbReference type="HAMAP-Rule" id="MF_01174"/>
    </source>
</evidence>
<keyword id="KW-0056">Arginine metabolism</keyword>
<keyword id="KW-0520">NAD</keyword>
<keyword id="KW-0560">Oxidoreductase</keyword>
<gene>
    <name evidence="1" type="primary">astD</name>
    <name type="ordered locus">YPTS_2013</name>
</gene>
<sequence>MSQHVMFNAVLSSHPALFIQGEWRIGNGVSFEKQDPMSQQRLWQARAADHTDVTLACHAARAAFPAWARASLEQRATVIQQFAALLEQHKQSLARTISLETSKPYWETLTEVQAMIGKVAISLQAYQTRTGHSQTPMGDSMSVLRHRPHGVLAVFGPYNFPGHLPNGHIVPALLAGNTVVFKPSELTPWTAEETVKLWQEAGIPDGVLNLVQGGRETGEALAAQPDIDGLLFTGSAHTGYHLHRQLAGQPEKMLALEMGGNNALIVEQVKDRDAVVNLAIQSAFISAGQRCTCSRRLLVKTGAEGDAFLLRFTAVAQALRIGRWDEQPAPFMGAVISSQAAERMLAAQQHLLLLGGESLLNMTRPDSQSALLTPGIIDITNISEVPDEEYFGPLVSVIRYTDFTEALKIANQTRFGLAVGLVSEDRQQFEQLLLEARAGIVNWNKPLTGASSAAPFGGVGASGNHRPSAFYAADYCAWPMASLECEHLTLPATLSPGISFDLPKV</sequence>
<reference key="1">
    <citation type="submission" date="2008-04" db="EMBL/GenBank/DDBJ databases">
        <title>Complete sequence of Yersinia pseudotuberculosis PB1/+.</title>
        <authorList>
            <person name="Copeland A."/>
            <person name="Lucas S."/>
            <person name="Lapidus A."/>
            <person name="Glavina del Rio T."/>
            <person name="Dalin E."/>
            <person name="Tice H."/>
            <person name="Bruce D."/>
            <person name="Goodwin L."/>
            <person name="Pitluck S."/>
            <person name="Munk A.C."/>
            <person name="Brettin T."/>
            <person name="Detter J.C."/>
            <person name="Han C."/>
            <person name="Tapia R."/>
            <person name="Schmutz J."/>
            <person name="Larimer F."/>
            <person name="Land M."/>
            <person name="Hauser L."/>
            <person name="Challacombe J.F."/>
            <person name="Green L."/>
            <person name="Lindler L.E."/>
            <person name="Nikolich M.P."/>
            <person name="Richardson P."/>
        </authorList>
    </citation>
    <scope>NUCLEOTIDE SEQUENCE [LARGE SCALE GENOMIC DNA]</scope>
    <source>
        <strain>PB1/+</strain>
    </source>
</reference>
<dbReference type="EC" id="1.2.1.71" evidence="1"/>
<dbReference type="EMBL" id="CP001048">
    <property type="protein sequence ID" value="ACC88979.1"/>
    <property type="molecule type" value="Genomic_DNA"/>
</dbReference>
<dbReference type="RefSeq" id="WP_011192372.1">
    <property type="nucleotide sequence ID" value="NZ_CP009780.1"/>
</dbReference>
<dbReference type="SMR" id="B2K296"/>
<dbReference type="KEGG" id="ypb:YPTS_2013"/>
<dbReference type="UniPathway" id="UPA00185">
    <property type="reaction ID" value="UER00282"/>
</dbReference>
<dbReference type="GO" id="GO:0043824">
    <property type="term" value="F:succinylglutamate-semialdehyde dehydrogenase activity"/>
    <property type="evidence" value="ECO:0007669"/>
    <property type="project" value="UniProtKB-EC"/>
</dbReference>
<dbReference type="GO" id="GO:0019544">
    <property type="term" value="P:arginine catabolic process to glutamate"/>
    <property type="evidence" value="ECO:0007669"/>
    <property type="project" value="UniProtKB-UniRule"/>
</dbReference>
<dbReference type="GO" id="GO:0019545">
    <property type="term" value="P:arginine catabolic process to succinate"/>
    <property type="evidence" value="ECO:0007669"/>
    <property type="project" value="UniProtKB-UniRule"/>
</dbReference>
<dbReference type="CDD" id="cd07095">
    <property type="entry name" value="ALDH_SGSD_AstD"/>
    <property type="match status" value="1"/>
</dbReference>
<dbReference type="FunFam" id="3.40.309.10:FF:000013">
    <property type="entry name" value="N-succinylglutamate 5-semialdehyde dehydrogenase"/>
    <property type="match status" value="1"/>
</dbReference>
<dbReference type="FunFam" id="3.40.605.10:FF:000010">
    <property type="entry name" value="N-succinylglutamate 5-semialdehyde dehydrogenase"/>
    <property type="match status" value="1"/>
</dbReference>
<dbReference type="Gene3D" id="3.40.605.10">
    <property type="entry name" value="Aldehyde Dehydrogenase, Chain A, domain 1"/>
    <property type="match status" value="1"/>
</dbReference>
<dbReference type="Gene3D" id="3.40.309.10">
    <property type="entry name" value="Aldehyde Dehydrogenase, Chain A, domain 2"/>
    <property type="match status" value="1"/>
</dbReference>
<dbReference type="HAMAP" id="MF_01174">
    <property type="entry name" value="Aldedh_AstD"/>
    <property type="match status" value="1"/>
</dbReference>
<dbReference type="InterPro" id="IPR016161">
    <property type="entry name" value="Ald_DH/histidinol_DH"/>
</dbReference>
<dbReference type="InterPro" id="IPR016163">
    <property type="entry name" value="Ald_DH_C"/>
</dbReference>
<dbReference type="InterPro" id="IPR016160">
    <property type="entry name" value="Ald_DH_CS_CYS"/>
</dbReference>
<dbReference type="InterPro" id="IPR029510">
    <property type="entry name" value="Ald_DH_CS_GLU"/>
</dbReference>
<dbReference type="InterPro" id="IPR016162">
    <property type="entry name" value="Ald_DH_N"/>
</dbReference>
<dbReference type="InterPro" id="IPR015590">
    <property type="entry name" value="Aldehyde_DH_dom"/>
</dbReference>
<dbReference type="InterPro" id="IPR017649">
    <property type="entry name" value="SuccinylGlu_semiald_DH_AstD"/>
</dbReference>
<dbReference type="NCBIfam" id="TIGR03240">
    <property type="entry name" value="arg_catab_astD"/>
    <property type="match status" value="1"/>
</dbReference>
<dbReference type="NCBIfam" id="NF006992">
    <property type="entry name" value="PRK09457.1"/>
    <property type="match status" value="1"/>
</dbReference>
<dbReference type="PANTHER" id="PTHR11699">
    <property type="entry name" value="ALDEHYDE DEHYDROGENASE-RELATED"/>
    <property type="match status" value="1"/>
</dbReference>
<dbReference type="Pfam" id="PF00171">
    <property type="entry name" value="Aldedh"/>
    <property type="match status" value="1"/>
</dbReference>
<dbReference type="SUPFAM" id="SSF53720">
    <property type="entry name" value="ALDH-like"/>
    <property type="match status" value="1"/>
</dbReference>
<dbReference type="PROSITE" id="PS00070">
    <property type="entry name" value="ALDEHYDE_DEHYDR_CYS"/>
    <property type="match status" value="1"/>
</dbReference>
<dbReference type="PROSITE" id="PS00687">
    <property type="entry name" value="ALDEHYDE_DEHYDR_GLU"/>
    <property type="match status" value="1"/>
</dbReference>
<protein>
    <recommendedName>
        <fullName evidence="1">N-succinylglutamate 5-semialdehyde dehydrogenase</fullName>
        <ecNumber evidence="1">1.2.1.71</ecNumber>
    </recommendedName>
    <alternativeName>
        <fullName evidence="1">Succinylglutamic semialdehyde dehydrogenase</fullName>
        <shortName evidence="1">SGSD</shortName>
    </alternativeName>
</protein>
<name>ASTD_YERPB</name>